<protein>
    <recommendedName>
        <fullName evidence="10 11 12">Tyrosine-protein kinase-like otk</fullName>
    </recommendedName>
    <alternativeName>
        <fullName evidence="17">Gp160-Dtrk</fullName>
        <shortName evidence="17">Dtrk</shortName>
    </alternativeName>
    <alternativeName>
        <fullName evidence="15">Off-track</fullName>
    </alternativeName>
    <alternativeName>
        <fullName>Tyrosine-protein kinase-like 7 homolog</fullName>
    </alternativeName>
</protein>
<feature type="signal peptide" evidence="1">
    <location>
        <begin position="1"/>
        <end position="22"/>
    </location>
</feature>
<feature type="chain" id="PRO_5000145927" description="Tyrosine-protein kinase-like otk" evidence="1">
    <location>
        <begin position="23"/>
        <end position="1033"/>
    </location>
</feature>
<feature type="topological domain" description="Extracellular" evidence="1">
    <location>
        <begin position="23"/>
        <end position="581"/>
    </location>
</feature>
<feature type="transmembrane region" description="Helical" evidence="1">
    <location>
        <begin position="582"/>
        <end position="602"/>
    </location>
</feature>
<feature type="topological domain" description="Cytoplasmic" evidence="1">
    <location>
        <begin position="603"/>
        <end position="1033"/>
    </location>
</feature>
<feature type="domain" description="Ig-like C2-type 1" evidence="1">
    <location>
        <begin position="25"/>
        <end position="114"/>
    </location>
</feature>
<feature type="domain" description="Ig-like C2-type 2" evidence="1">
    <location>
        <begin position="113"/>
        <end position="199"/>
    </location>
</feature>
<feature type="domain" description="Ig-like C2-type 3" evidence="1">
    <location>
        <begin position="251"/>
        <end position="365"/>
    </location>
</feature>
<feature type="domain" description="Ig-like C2-type 4" evidence="1">
    <location>
        <begin position="368"/>
        <end position="463"/>
    </location>
</feature>
<feature type="domain" description="Ig-like C2-type 5" evidence="1">
    <location>
        <begin position="468"/>
        <end position="558"/>
    </location>
</feature>
<feature type="domain" description="Protein kinase; inactive" evidence="3 13">
    <location>
        <begin position="692"/>
        <end position="1028"/>
    </location>
</feature>
<feature type="region of interest" description="Disordered" evidence="4">
    <location>
        <begin position="617"/>
        <end position="679"/>
    </location>
</feature>
<feature type="region of interest" description="Disordered" evidence="4">
    <location>
        <begin position="718"/>
        <end position="760"/>
    </location>
</feature>
<feature type="compositionally biased region" description="Polar residues" evidence="4">
    <location>
        <begin position="655"/>
        <end position="673"/>
    </location>
</feature>
<feature type="compositionally biased region" description="Basic and acidic residues" evidence="4">
    <location>
        <begin position="720"/>
        <end position="731"/>
    </location>
</feature>
<feature type="modified residue" description="Phosphoserine" evidence="8">
    <location>
        <position position="678"/>
    </location>
</feature>
<feature type="glycosylation site" description="N-linked (GlcNAc...) asparagine" evidence="1">
    <location>
        <position position="39"/>
    </location>
</feature>
<feature type="glycosylation site" description="N-linked (GlcNAc...) asparagine" evidence="1">
    <location>
        <position position="336"/>
    </location>
</feature>
<feature type="glycosylation site" description="N-linked (GlcNAc...) asparagine" evidence="1">
    <location>
        <position position="417"/>
    </location>
</feature>
<feature type="glycosylation site" description="N-linked (GlcNAc...) asparagine" evidence="1">
    <location>
        <position position="429"/>
    </location>
</feature>
<feature type="glycosylation site" description="N-linked (GlcNAc...) asparagine" evidence="1">
    <location>
        <position position="444"/>
    </location>
</feature>
<feature type="glycosylation site" description="N-linked (GlcNAc...) asparagine" evidence="1">
    <location>
        <position position="457"/>
    </location>
</feature>
<feature type="glycosylation site" description="N-linked (GlcNAc...) asparagine" evidence="1">
    <location>
        <position position="512"/>
    </location>
</feature>
<feature type="glycosylation site" description="N-linked (GlcNAc...) asparagine" evidence="9">
    <location>
        <position position="524"/>
    </location>
</feature>
<feature type="disulfide bond" evidence="2">
    <location>
        <begin position="46"/>
        <end position="95"/>
    </location>
</feature>
<feature type="disulfide bond" evidence="2">
    <location>
        <begin position="137"/>
        <end position="188"/>
    </location>
</feature>
<feature type="disulfide bond" evidence="2">
    <location>
        <begin position="276"/>
        <end position="354"/>
    </location>
</feature>
<feature type="disulfide bond" evidence="2">
    <location>
        <begin position="399"/>
        <end position="447"/>
    </location>
</feature>
<feature type="disulfide bond" evidence="2">
    <location>
        <begin position="490"/>
        <end position="542"/>
    </location>
</feature>
<feature type="sequence conflict" description="In Ref. 1; CAA45053." evidence="13" ref="1">
    <original>E</original>
    <variation>Q</variation>
    <location>
        <position position="221"/>
    </location>
</feature>
<feature type="sequence conflict" description="In Ref. 4; ACQ91629." evidence="13" ref="4">
    <original>G</original>
    <variation>S</variation>
    <location>
        <position position="239"/>
    </location>
</feature>
<feature type="sequence conflict" description="In Ref. 1; CAA45053." evidence="13" ref="1">
    <original>P</original>
    <variation>H</variation>
    <location>
        <position position="271"/>
    </location>
</feature>
<feature type="sequence conflict" description="In Ref. 1; CAA45053." evidence="13" ref="1">
    <original>I</original>
    <variation>F</variation>
    <location>
        <position position="311"/>
    </location>
</feature>
<feature type="sequence conflict" description="In Ref. 4; ACQ91629." evidence="13" ref="4">
    <original>Q</original>
    <variation>L</variation>
    <location>
        <position position="402"/>
    </location>
</feature>
<feature type="sequence conflict" description="In Ref. 1; CAA45053." evidence="13" ref="1">
    <original>V</original>
    <variation>I</variation>
    <location>
        <position position="629"/>
    </location>
</feature>
<feature type="sequence conflict" description="In Ref. 1; CAA45053." evidence="13" ref="1">
    <original>D</original>
    <variation>E</variation>
    <location>
        <position position="772"/>
    </location>
</feature>
<feature type="strand" evidence="19">
    <location>
        <begin position="255"/>
        <end position="258"/>
    </location>
</feature>
<feature type="strand" evidence="19">
    <location>
        <begin position="262"/>
        <end position="267"/>
    </location>
</feature>
<feature type="strand" evidence="19">
    <location>
        <begin position="272"/>
        <end position="274"/>
    </location>
</feature>
<feature type="strand" evidence="19">
    <location>
        <begin position="277"/>
        <end position="279"/>
    </location>
</feature>
<feature type="helix" evidence="19">
    <location>
        <begin position="282"/>
        <end position="284"/>
    </location>
</feature>
<feature type="strand" evidence="19">
    <location>
        <begin position="289"/>
        <end position="295"/>
    </location>
</feature>
<feature type="strand" evidence="19">
    <location>
        <begin position="298"/>
        <end position="304"/>
    </location>
</feature>
<feature type="strand" evidence="19">
    <location>
        <begin position="329"/>
        <end position="332"/>
    </location>
</feature>
<feature type="turn" evidence="19">
    <location>
        <begin position="334"/>
        <end position="336"/>
    </location>
</feature>
<feature type="strand" evidence="19">
    <location>
        <begin position="339"/>
        <end position="343"/>
    </location>
</feature>
<feature type="helix" evidence="19">
    <location>
        <begin position="346"/>
        <end position="348"/>
    </location>
</feature>
<feature type="strand" evidence="19">
    <location>
        <begin position="350"/>
        <end position="358"/>
    </location>
</feature>
<feature type="strand" evidence="19">
    <location>
        <begin position="369"/>
        <end position="374"/>
    </location>
</feature>
<feature type="strand" evidence="19">
    <location>
        <begin position="378"/>
        <end position="381"/>
    </location>
</feature>
<feature type="strand" evidence="19">
    <location>
        <begin position="386"/>
        <end position="389"/>
    </location>
</feature>
<feature type="strand" evidence="19">
    <location>
        <begin position="393"/>
        <end position="397"/>
    </location>
</feature>
<feature type="strand" evidence="19">
    <location>
        <begin position="408"/>
        <end position="413"/>
    </location>
</feature>
<feature type="strand" evidence="19">
    <location>
        <begin position="424"/>
        <end position="426"/>
    </location>
</feature>
<feature type="strand" evidence="19">
    <location>
        <begin position="432"/>
        <end position="436"/>
    </location>
</feature>
<feature type="helix" evidence="19">
    <location>
        <begin position="439"/>
        <end position="441"/>
    </location>
</feature>
<feature type="strand" evidence="19">
    <location>
        <begin position="443"/>
        <end position="451"/>
    </location>
</feature>
<feature type="strand" evidence="19">
    <location>
        <begin position="454"/>
        <end position="472"/>
    </location>
</feature>
<feature type="strand" evidence="19">
    <location>
        <begin position="478"/>
        <end position="481"/>
    </location>
</feature>
<feature type="strand" evidence="19">
    <location>
        <begin position="486"/>
        <end position="488"/>
    </location>
</feature>
<feature type="strand" evidence="19">
    <location>
        <begin position="491"/>
        <end position="496"/>
    </location>
</feature>
<feature type="strand" evidence="19">
    <location>
        <begin position="499"/>
        <end position="504"/>
    </location>
</feature>
<feature type="turn" evidence="19">
    <location>
        <begin position="511"/>
        <end position="513"/>
    </location>
</feature>
<feature type="turn" evidence="19">
    <location>
        <begin position="516"/>
        <end position="518"/>
    </location>
</feature>
<feature type="strand" evidence="19">
    <location>
        <begin position="519"/>
        <end position="521"/>
    </location>
</feature>
<feature type="strand" evidence="19">
    <location>
        <begin position="527"/>
        <end position="529"/>
    </location>
</feature>
<feature type="helix" evidence="19">
    <location>
        <begin position="534"/>
        <end position="536"/>
    </location>
</feature>
<feature type="strand" evidence="19">
    <location>
        <begin position="538"/>
        <end position="545"/>
    </location>
</feature>
<feature type="strand" evidence="19">
    <location>
        <begin position="550"/>
        <end position="560"/>
    </location>
</feature>
<dbReference type="EMBL" id="X63453">
    <property type="protein sequence ID" value="CAA45053.1"/>
    <property type="molecule type" value="mRNA"/>
</dbReference>
<dbReference type="EMBL" id="AE013599">
    <property type="protein sequence ID" value="AAF58596.1"/>
    <property type="molecule type" value="Genomic_DNA"/>
</dbReference>
<dbReference type="EMBL" id="BT015249">
    <property type="protein sequence ID" value="AAT94478.1"/>
    <property type="molecule type" value="mRNA"/>
</dbReference>
<dbReference type="EMBL" id="BT083425">
    <property type="protein sequence ID" value="ACQ91629.1"/>
    <property type="molecule type" value="mRNA"/>
</dbReference>
<dbReference type="PIR" id="S19247">
    <property type="entry name" value="S19247"/>
</dbReference>
<dbReference type="RefSeq" id="NP_523705.2">
    <property type="nucleotide sequence ID" value="NM_078981.3"/>
</dbReference>
<dbReference type="PDB" id="6S9F">
    <property type="method" value="X-ray"/>
    <property type="resolution" value="1.97 A"/>
    <property type="chains" value="A/B=24-580"/>
</dbReference>
<dbReference type="PDBsum" id="6S9F"/>
<dbReference type="SMR" id="Q6AWJ9"/>
<dbReference type="BioGRID" id="62067">
    <property type="interactions" value="10"/>
</dbReference>
<dbReference type="FunCoup" id="Q6AWJ9">
    <property type="interactions" value="259"/>
</dbReference>
<dbReference type="IntAct" id="Q6AWJ9">
    <property type="interactions" value="5"/>
</dbReference>
<dbReference type="MINT" id="Q6AWJ9"/>
<dbReference type="STRING" id="7227.FBpp0087135"/>
<dbReference type="GlyCosmos" id="Q6AWJ9">
    <property type="glycosylation" value="8 sites, No reported glycans"/>
</dbReference>
<dbReference type="GlyGen" id="Q6AWJ9">
    <property type="glycosylation" value="8 sites"/>
</dbReference>
<dbReference type="iPTMnet" id="Q6AWJ9"/>
<dbReference type="PaxDb" id="7227-FBpp0087135"/>
<dbReference type="DNASU" id="36283"/>
<dbReference type="EnsemblMetazoa" id="FBtr0088028">
    <property type="protein sequence ID" value="FBpp0087135"/>
    <property type="gene ID" value="FBgn0004839"/>
</dbReference>
<dbReference type="GeneID" id="36283"/>
<dbReference type="KEGG" id="dme:Dmel_CG8967"/>
<dbReference type="UCSC" id="CG8967-RA">
    <property type="organism name" value="d. melanogaster"/>
</dbReference>
<dbReference type="AGR" id="FB:FBgn0004839"/>
<dbReference type="CTD" id="36283"/>
<dbReference type="FlyBase" id="FBgn0004839">
    <property type="gene designation" value="otk"/>
</dbReference>
<dbReference type="VEuPathDB" id="VectorBase:FBgn0004839"/>
<dbReference type="eggNOG" id="KOG1026">
    <property type="taxonomic scope" value="Eukaryota"/>
</dbReference>
<dbReference type="eggNOG" id="KOG4475">
    <property type="taxonomic scope" value="Eukaryota"/>
</dbReference>
<dbReference type="GeneTree" id="ENSGT00940000157908"/>
<dbReference type="HOGENOM" id="CLU_012268_0_0_1"/>
<dbReference type="InParanoid" id="Q6AWJ9"/>
<dbReference type="OMA" id="SHLHIEA"/>
<dbReference type="OrthoDB" id="2413561at2759"/>
<dbReference type="PhylomeDB" id="Q6AWJ9"/>
<dbReference type="SignaLink" id="Q6AWJ9"/>
<dbReference type="BioGRID-ORCS" id="36283">
    <property type="hits" value="0 hits in 3 CRISPR screens"/>
</dbReference>
<dbReference type="ChiTaRS" id="otk">
    <property type="organism name" value="fly"/>
</dbReference>
<dbReference type="GenomeRNAi" id="36283"/>
<dbReference type="PRO" id="PR:Q6AWJ9"/>
<dbReference type="Proteomes" id="UP000000803">
    <property type="component" value="Chromosome 2R"/>
</dbReference>
<dbReference type="Bgee" id="FBgn0004839">
    <property type="expression patterns" value="Expressed in escort cell (Drosophila) in ovary and 61 other cell types or tissues"/>
</dbReference>
<dbReference type="ExpressionAtlas" id="Q6AWJ9">
    <property type="expression patterns" value="baseline and differential"/>
</dbReference>
<dbReference type="GO" id="GO:0030424">
    <property type="term" value="C:axon"/>
    <property type="evidence" value="ECO:0000314"/>
    <property type="project" value="FlyBase"/>
</dbReference>
<dbReference type="GO" id="GO:0016020">
    <property type="term" value="C:membrane"/>
    <property type="evidence" value="ECO:0000255"/>
    <property type="project" value="FlyBase"/>
</dbReference>
<dbReference type="GO" id="GO:0005886">
    <property type="term" value="C:plasma membrane"/>
    <property type="evidence" value="ECO:0000314"/>
    <property type="project" value="FlyBase"/>
</dbReference>
<dbReference type="GO" id="GO:0005524">
    <property type="term" value="F:ATP binding"/>
    <property type="evidence" value="ECO:0007669"/>
    <property type="project" value="InterPro"/>
</dbReference>
<dbReference type="GO" id="GO:0050839">
    <property type="term" value="F:cell adhesion molecule binding"/>
    <property type="evidence" value="ECO:0000314"/>
    <property type="project" value="FlyBase"/>
</dbReference>
<dbReference type="GO" id="GO:0098632">
    <property type="term" value="F:cell-cell adhesion mediator activity"/>
    <property type="evidence" value="ECO:0000318"/>
    <property type="project" value="GO_Central"/>
</dbReference>
<dbReference type="GO" id="GO:0046982">
    <property type="term" value="F:protein heterodimerization activity"/>
    <property type="evidence" value="ECO:0000353"/>
    <property type="project" value="FlyBase"/>
</dbReference>
<dbReference type="GO" id="GO:0042803">
    <property type="term" value="F:protein homodimerization activity"/>
    <property type="evidence" value="ECO:0000353"/>
    <property type="project" value="FlyBase"/>
</dbReference>
<dbReference type="GO" id="GO:0030215">
    <property type="term" value="F:semaphorin receptor binding"/>
    <property type="evidence" value="ECO:0000304"/>
    <property type="project" value="FlyBase"/>
</dbReference>
<dbReference type="GO" id="GO:0004714">
    <property type="term" value="F:transmembrane receptor protein tyrosine kinase activity"/>
    <property type="evidence" value="ECO:0000314"/>
    <property type="project" value="FlyBase"/>
</dbReference>
<dbReference type="GO" id="GO:0004888">
    <property type="term" value="F:transmembrane signaling receptor activity"/>
    <property type="evidence" value="ECO:0000316"/>
    <property type="project" value="FlyBase"/>
</dbReference>
<dbReference type="GO" id="GO:0017147">
    <property type="term" value="F:Wnt-protein binding"/>
    <property type="evidence" value="ECO:0000353"/>
    <property type="project" value="FlyBase"/>
</dbReference>
<dbReference type="GO" id="GO:0007411">
    <property type="term" value="P:axon guidance"/>
    <property type="evidence" value="ECO:0000315"/>
    <property type="project" value="FlyBase"/>
</dbReference>
<dbReference type="GO" id="GO:0007155">
    <property type="term" value="P:cell adhesion"/>
    <property type="evidence" value="ECO:0000314"/>
    <property type="project" value="FlyBase"/>
</dbReference>
<dbReference type="GO" id="GO:0070593">
    <property type="term" value="P:dendrite self-avoidance"/>
    <property type="evidence" value="ECO:0000318"/>
    <property type="project" value="GO_Central"/>
</dbReference>
<dbReference type="GO" id="GO:0007156">
    <property type="term" value="P:homophilic cell adhesion via plasma membrane adhesion molecules"/>
    <property type="evidence" value="ECO:0000318"/>
    <property type="project" value="GO_Central"/>
</dbReference>
<dbReference type="GO" id="GO:0048804">
    <property type="term" value="P:imaginal disc-derived female genitalia morphogenesis"/>
    <property type="evidence" value="ECO:0000316"/>
    <property type="project" value="FlyBase"/>
</dbReference>
<dbReference type="GO" id="GO:0048803">
    <property type="term" value="P:imaginal disc-derived male genitalia morphogenesis"/>
    <property type="evidence" value="ECO:0000316"/>
    <property type="project" value="FlyBase"/>
</dbReference>
<dbReference type="GO" id="GO:0035260">
    <property type="term" value="P:internal genitalia morphogenesis"/>
    <property type="evidence" value="ECO:0000316"/>
    <property type="project" value="FlyBase"/>
</dbReference>
<dbReference type="GO" id="GO:0090090">
    <property type="term" value="P:negative regulation of canonical Wnt signaling pathway"/>
    <property type="evidence" value="ECO:0000315"/>
    <property type="project" value="FlyBase"/>
</dbReference>
<dbReference type="GO" id="GO:0072499">
    <property type="term" value="P:photoreceptor cell axon guidance"/>
    <property type="evidence" value="ECO:0000315"/>
    <property type="project" value="FlyBase"/>
</dbReference>
<dbReference type="GO" id="GO:0060828">
    <property type="term" value="P:regulation of canonical Wnt signaling pathway"/>
    <property type="evidence" value="ECO:0000318"/>
    <property type="project" value="GO_Central"/>
</dbReference>
<dbReference type="GO" id="GO:0031290">
    <property type="term" value="P:retinal ganglion cell axon guidance"/>
    <property type="evidence" value="ECO:0000315"/>
    <property type="project" value="UniProtKB"/>
</dbReference>
<dbReference type="CDD" id="cd00096">
    <property type="entry name" value="Ig"/>
    <property type="match status" value="2"/>
</dbReference>
<dbReference type="CDD" id="cd05046">
    <property type="entry name" value="PTK_CCK4"/>
    <property type="match status" value="1"/>
</dbReference>
<dbReference type="FunFam" id="1.10.510.10:FF:000954">
    <property type="entry name" value="Tyrosine-protein kinase-like otk"/>
    <property type="match status" value="1"/>
</dbReference>
<dbReference type="FunFam" id="2.60.40.10:FF:001805">
    <property type="entry name" value="Tyrosine-protein kinase-like otk"/>
    <property type="match status" value="1"/>
</dbReference>
<dbReference type="FunFam" id="2.60.40.10:FF:002027">
    <property type="entry name" value="Tyrosine-protein kinase-like otk"/>
    <property type="match status" value="1"/>
</dbReference>
<dbReference type="FunFam" id="2.60.40.10:FF:002086">
    <property type="entry name" value="Tyrosine-protein kinase-like otk"/>
    <property type="match status" value="1"/>
</dbReference>
<dbReference type="FunFam" id="2.60.40.10:FF:002809">
    <property type="entry name" value="Tyrosine-protein kinase-like otk"/>
    <property type="match status" value="1"/>
</dbReference>
<dbReference type="FunFam" id="3.30.200.20:FF:001776">
    <property type="entry name" value="Tyrosine-protein kinase-like otk"/>
    <property type="match status" value="1"/>
</dbReference>
<dbReference type="FunFam" id="2.60.40.10:FF:002127">
    <property type="entry name" value="tyrosine-protein kinase-like otk"/>
    <property type="match status" value="1"/>
</dbReference>
<dbReference type="Gene3D" id="2.60.40.10">
    <property type="entry name" value="Immunoglobulins"/>
    <property type="match status" value="5"/>
</dbReference>
<dbReference type="Gene3D" id="1.10.510.10">
    <property type="entry name" value="Transferase(Phosphotransferase) domain 1"/>
    <property type="match status" value="1"/>
</dbReference>
<dbReference type="InterPro" id="IPR007110">
    <property type="entry name" value="Ig-like_dom"/>
</dbReference>
<dbReference type="InterPro" id="IPR036179">
    <property type="entry name" value="Ig-like_dom_sf"/>
</dbReference>
<dbReference type="InterPro" id="IPR013783">
    <property type="entry name" value="Ig-like_fold"/>
</dbReference>
<dbReference type="InterPro" id="IPR013098">
    <property type="entry name" value="Ig_I-set"/>
</dbReference>
<dbReference type="InterPro" id="IPR003599">
    <property type="entry name" value="Ig_sub"/>
</dbReference>
<dbReference type="InterPro" id="IPR003598">
    <property type="entry name" value="Ig_sub2"/>
</dbReference>
<dbReference type="InterPro" id="IPR011009">
    <property type="entry name" value="Kinase-like_dom_sf"/>
</dbReference>
<dbReference type="InterPro" id="IPR000719">
    <property type="entry name" value="Prot_kinase_dom"/>
</dbReference>
<dbReference type="InterPro" id="IPR050122">
    <property type="entry name" value="RTK"/>
</dbReference>
<dbReference type="InterPro" id="IPR001245">
    <property type="entry name" value="Ser-Thr/Tyr_kinase_cat_dom"/>
</dbReference>
<dbReference type="InterPro" id="IPR008266">
    <property type="entry name" value="Tyr_kinase_AS"/>
</dbReference>
<dbReference type="InterPro" id="IPR020635">
    <property type="entry name" value="Tyr_kinase_cat_dom"/>
</dbReference>
<dbReference type="PANTHER" id="PTHR24416">
    <property type="entry name" value="TYROSINE-PROTEIN KINASE RECEPTOR"/>
    <property type="match status" value="1"/>
</dbReference>
<dbReference type="PANTHER" id="PTHR24416:SF349">
    <property type="entry name" value="TYROSINE-PROTEIN KINASE RYK"/>
    <property type="match status" value="1"/>
</dbReference>
<dbReference type="Pfam" id="PF07679">
    <property type="entry name" value="I-set"/>
    <property type="match status" value="3"/>
</dbReference>
<dbReference type="Pfam" id="PF13927">
    <property type="entry name" value="Ig_3"/>
    <property type="match status" value="1"/>
</dbReference>
<dbReference type="Pfam" id="PF07714">
    <property type="entry name" value="PK_Tyr_Ser-Thr"/>
    <property type="match status" value="1"/>
</dbReference>
<dbReference type="PIRSF" id="PIRSF000615">
    <property type="entry name" value="TyrPK_CSF1-R"/>
    <property type="match status" value="1"/>
</dbReference>
<dbReference type="PRINTS" id="PR00109">
    <property type="entry name" value="TYRKINASE"/>
</dbReference>
<dbReference type="SMART" id="SM00409">
    <property type="entry name" value="IG"/>
    <property type="match status" value="5"/>
</dbReference>
<dbReference type="SMART" id="SM00408">
    <property type="entry name" value="IGc2"/>
    <property type="match status" value="5"/>
</dbReference>
<dbReference type="SMART" id="SM00219">
    <property type="entry name" value="TyrKc"/>
    <property type="match status" value="1"/>
</dbReference>
<dbReference type="SUPFAM" id="SSF48726">
    <property type="entry name" value="Immunoglobulin"/>
    <property type="match status" value="4"/>
</dbReference>
<dbReference type="SUPFAM" id="SSF56112">
    <property type="entry name" value="Protein kinase-like (PK-like)"/>
    <property type="match status" value="1"/>
</dbReference>
<dbReference type="PROSITE" id="PS50835">
    <property type="entry name" value="IG_LIKE"/>
    <property type="match status" value="5"/>
</dbReference>
<dbReference type="PROSITE" id="PS50011">
    <property type="entry name" value="PROTEIN_KINASE_DOM"/>
    <property type="match status" value="1"/>
</dbReference>
<dbReference type="PROSITE" id="PS00109">
    <property type="entry name" value="PROTEIN_KINASE_TYR"/>
    <property type="match status" value="1"/>
</dbReference>
<sequence length="1033" mass="114267">MTARMISICGLVMALMMASVLASSSRFQRVPQSQSVVENESVKFECESTDSYSELHYDWLHNGHRIAYDKRVHQIGSNLHIEAVRRTEDVGNYVCIATNLASGAREASPPAKLSVIYLESASVQLLGSNRNELLLKCHVEGASGDLEPLEIEWYRNSEKLSTWKNVQLDQHRLIIRQPGSEDDGLYRCTASNAAGRVMSKQGYVYQSSVKCLPRLPRRKNEKMMESWDKQTFLCRGKRGGAAGLEALPAAPEDLRIVQGPIGQSIIKEGEPTALTCLYELPDELKNQRIQLRWRKDGKLLRQVELGGSAPIPGHSFDSGKDALLREDARLVLHKQNGTLSFASIIASDAGQYQCQLQLEAHAPINSSPGILEVIEQLKFVPQPTSKNLELDAVVAKVHCKAQGTPTPQVQWVRDGENTTLPDHVEVDANGTLIFRNVNSEHRGNYTCLATNSQGQINATVAINVVVTPKFSVPPVGPIETSEQGTVVMHCQAIGDPKPTIQWDKDLKYLSENNTDRERFRFLENGTLEIRNVQVEDEGSYGCTIGNSAGLKREDVQLVVKTTGDGFAPEESGGDGFLVTRAVLITMTVALAYIVLVVGLMLWCRYRRQARKARLNDLSTKEAGGDQPDVAGNGKGSEQEPCLSKQHNGHSKSRSKSSGDAQKSDDTACSQQSRASKKSAHIYEQLALPRSGLSELIQIGRGEFGDVFVGKLKATLVTSPSDKDADTEKQHSNSENGSGGSGSGSTTLSTLNEKRRSKTSMDDIEEIKEEEQDQHNQSGLEQLVLVKALNKVKDEQACQEFRRQLDLLRAISHKGVVRLFGLCREKDPHYMVLEYTDWGDLKQFLLATAGKVNTATAGSSSPPPLTTSQVLAVAYQIARGMDAIYRARFTHRDLATRNCVISSEFIVKVSYPALCKDKYSREYHKHRNTLLPIRWLAPECIQEDEYTTKSDIFAYGVVVWELFNQATKLPHEELTNEQVVQRSQAGSLEWSVAEATPDSLREILLSCWVSNPKERPSFSQLGAALSKAMQSAEK</sequence>
<proteinExistence type="evidence at protein level"/>
<accession>Q6AWJ9</accession>
<accession>C4IXZ4</accession>
<accession>Q24327</accession>
<comment type="function">
    <text evidence="5 6 7">Acts as a calcium-dependent, homophilic cell adhesion molecule that regulates neural recognition during the development of the nervous system. Component of the repulsive Plexin signaling response to regulate motor axon guidance at the embryonic stage. Also component of a receptor complex that is required in the adult visual system to innervate the lamina layer; specific targeting of R1-R6 axons.</text>
</comment>
<comment type="subunit">
    <text evidence="5">Interacts with plexA; component of a receptor complex that mediates the repulsive signaling in response to Semaphorin ligands.</text>
</comment>
<comment type="subcellular location">
    <subcellularLocation>
        <location evidence="6">Cell membrane</location>
        <topology evidence="6">Single-pass type I membrane protein</topology>
    </subcellularLocation>
</comment>
<comment type="tissue specificity">
    <text evidence="6 7">Dynamically expressed during embryogenesis in several areas of the developing nervous system, including neurons and fasciculating axons. Expression in stage 7 embryos is seen in the anterior midgut primordia, cephalic furrow and along the germinal band. At stage 11, expression is in 15 stripes over the trunk region, and in the anterior and posterior midgut primordia. Stage 12 shows expression in the developing nervous system, procephalic lobe and maxillar bud. Stage 13 shows expression in the ventral cord, maxillar segment and in three regions of the gut. At stage 16 expression is preferentially detected throughout the nervous system, including the neuromers in the ventral cord and the supraesophageal ganglion (at protein level). In larva, expression is seen in developing R cells and is localized predominantly to R1-R6 growth cones.</text>
</comment>
<comment type="developmental stage">
    <text evidence="6">Expressed both maternally and zygotically, during early to mid embryogenesis and early pupation.</text>
</comment>
<comment type="disruption phenotype">
    <text evidence="5 7">Axon guidance defects. R-cell differentiation and cell fate determination are normal, but many R1-R6 axons connect abnormally to medulla instead of innervating lamina.</text>
</comment>
<comment type="similarity">
    <text evidence="3">Belongs to the protein kinase superfamily. Tyr protein kinase family. Insulin receptor subfamily.</text>
</comment>
<comment type="caution">
    <text evidence="14">This protein has been proposed to undergo autophosphorylation on tyrosine residues which is induced in response to cell adhesion (PubMed:1371458). However, as mammalian orthologs of this protein seem to lack kinase activity this protein may associate with, and be phosphorylated by, an unknown active tyrosine kinase.</text>
</comment>
<reference evidence="13 17" key="1">
    <citation type="journal article" date="1992" name="EMBO J.">
        <title>Dtrk, a Drosophila gene related to the trk family of neurotrophin receptors, encodes a novel class of neural cell adhesion molecule.</title>
        <authorList>
            <person name="Pulido D."/>
            <person name="Campuzano S."/>
            <person name="Koda T."/>
            <person name="Modolell J."/>
            <person name="Barbacid M."/>
        </authorList>
    </citation>
    <scope>NUCLEOTIDE SEQUENCE [MRNA]</scope>
    <scope>FUNCTION</scope>
    <scope>SUBCELLULAR LOCATION</scope>
    <scope>TISSUE SPECIFICITY</scope>
    <scope>DEVELOPMENTAL STAGE</scope>
    <source>
        <strain evidence="17">Canton-S</strain>
        <tissue evidence="6">Embryo</tissue>
    </source>
</reference>
<reference evidence="15" key="2">
    <citation type="journal article" date="2000" name="Science">
        <title>The genome sequence of Drosophila melanogaster.</title>
        <authorList>
            <person name="Adams M.D."/>
            <person name="Celniker S.E."/>
            <person name="Holt R.A."/>
            <person name="Evans C.A."/>
            <person name="Gocayne J.D."/>
            <person name="Amanatides P.G."/>
            <person name="Scherer S.E."/>
            <person name="Li P.W."/>
            <person name="Hoskins R.A."/>
            <person name="Galle R.F."/>
            <person name="George R.A."/>
            <person name="Lewis S.E."/>
            <person name="Richards S."/>
            <person name="Ashburner M."/>
            <person name="Henderson S.N."/>
            <person name="Sutton G.G."/>
            <person name="Wortman J.R."/>
            <person name="Yandell M.D."/>
            <person name="Zhang Q."/>
            <person name="Chen L.X."/>
            <person name="Brandon R.C."/>
            <person name="Rogers Y.-H.C."/>
            <person name="Blazej R.G."/>
            <person name="Champe M."/>
            <person name="Pfeiffer B.D."/>
            <person name="Wan K.H."/>
            <person name="Doyle C."/>
            <person name="Baxter E.G."/>
            <person name="Helt G."/>
            <person name="Nelson C.R."/>
            <person name="Miklos G.L.G."/>
            <person name="Abril J.F."/>
            <person name="Agbayani A."/>
            <person name="An H.-J."/>
            <person name="Andrews-Pfannkoch C."/>
            <person name="Baldwin D."/>
            <person name="Ballew R.M."/>
            <person name="Basu A."/>
            <person name="Baxendale J."/>
            <person name="Bayraktaroglu L."/>
            <person name="Beasley E.M."/>
            <person name="Beeson K.Y."/>
            <person name="Benos P.V."/>
            <person name="Berman B.P."/>
            <person name="Bhandari D."/>
            <person name="Bolshakov S."/>
            <person name="Borkova D."/>
            <person name="Botchan M.R."/>
            <person name="Bouck J."/>
            <person name="Brokstein P."/>
            <person name="Brottier P."/>
            <person name="Burtis K.C."/>
            <person name="Busam D.A."/>
            <person name="Butler H."/>
            <person name="Cadieu E."/>
            <person name="Center A."/>
            <person name="Chandra I."/>
            <person name="Cherry J.M."/>
            <person name="Cawley S."/>
            <person name="Dahlke C."/>
            <person name="Davenport L.B."/>
            <person name="Davies P."/>
            <person name="de Pablos B."/>
            <person name="Delcher A."/>
            <person name="Deng Z."/>
            <person name="Mays A.D."/>
            <person name="Dew I."/>
            <person name="Dietz S.M."/>
            <person name="Dodson K."/>
            <person name="Doup L.E."/>
            <person name="Downes M."/>
            <person name="Dugan-Rocha S."/>
            <person name="Dunkov B.C."/>
            <person name="Dunn P."/>
            <person name="Durbin K.J."/>
            <person name="Evangelista C.C."/>
            <person name="Ferraz C."/>
            <person name="Ferriera S."/>
            <person name="Fleischmann W."/>
            <person name="Fosler C."/>
            <person name="Gabrielian A.E."/>
            <person name="Garg N.S."/>
            <person name="Gelbart W.M."/>
            <person name="Glasser K."/>
            <person name="Glodek A."/>
            <person name="Gong F."/>
            <person name="Gorrell J.H."/>
            <person name="Gu Z."/>
            <person name="Guan P."/>
            <person name="Harris M."/>
            <person name="Harris N.L."/>
            <person name="Harvey D.A."/>
            <person name="Heiman T.J."/>
            <person name="Hernandez J.R."/>
            <person name="Houck J."/>
            <person name="Hostin D."/>
            <person name="Houston K.A."/>
            <person name="Howland T.J."/>
            <person name="Wei M.-H."/>
            <person name="Ibegwam C."/>
            <person name="Jalali M."/>
            <person name="Kalush F."/>
            <person name="Karpen G.H."/>
            <person name="Ke Z."/>
            <person name="Kennison J.A."/>
            <person name="Ketchum K.A."/>
            <person name="Kimmel B.E."/>
            <person name="Kodira C.D."/>
            <person name="Kraft C.L."/>
            <person name="Kravitz S."/>
            <person name="Kulp D."/>
            <person name="Lai Z."/>
            <person name="Lasko P."/>
            <person name="Lei Y."/>
            <person name="Levitsky A.A."/>
            <person name="Li J.H."/>
            <person name="Li Z."/>
            <person name="Liang Y."/>
            <person name="Lin X."/>
            <person name="Liu X."/>
            <person name="Mattei B."/>
            <person name="McIntosh T.C."/>
            <person name="McLeod M.P."/>
            <person name="McPherson D."/>
            <person name="Merkulov G."/>
            <person name="Milshina N.V."/>
            <person name="Mobarry C."/>
            <person name="Morris J."/>
            <person name="Moshrefi A."/>
            <person name="Mount S.M."/>
            <person name="Moy M."/>
            <person name="Murphy B."/>
            <person name="Murphy L."/>
            <person name="Muzny D.M."/>
            <person name="Nelson D.L."/>
            <person name="Nelson D.R."/>
            <person name="Nelson K.A."/>
            <person name="Nixon K."/>
            <person name="Nusskern D.R."/>
            <person name="Pacleb J.M."/>
            <person name="Palazzolo M."/>
            <person name="Pittman G.S."/>
            <person name="Pan S."/>
            <person name="Pollard J."/>
            <person name="Puri V."/>
            <person name="Reese M.G."/>
            <person name="Reinert K."/>
            <person name="Remington K."/>
            <person name="Saunders R.D.C."/>
            <person name="Scheeler F."/>
            <person name="Shen H."/>
            <person name="Shue B.C."/>
            <person name="Siden-Kiamos I."/>
            <person name="Simpson M."/>
            <person name="Skupski M.P."/>
            <person name="Smith T.J."/>
            <person name="Spier E."/>
            <person name="Spradling A.C."/>
            <person name="Stapleton M."/>
            <person name="Strong R."/>
            <person name="Sun E."/>
            <person name="Svirskas R."/>
            <person name="Tector C."/>
            <person name="Turner R."/>
            <person name="Venter E."/>
            <person name="Wang A.H."/>
            <person name="Wang X."/>
            <person name="Wang Z.-Y."/>
            <person name="Wassarman D.A."/>
            <person name="Weinstock G.M."/>
            <person name="Weissenbach J."/>
            <person name="Williams S.M."/>
            <person name="Woodage T."/>
            <person name="Worley K.C."/>
            <person name="Wu D."/>
            <person name="Yang S."/>
            <person name="Yao Q.A."/>
            <person name="Ye J."/>
            <person name="Yeh R.-F."/>
            <person name="Zaveri J.S."/>
            <person name="Zhan M."/>
            <person name="Zhang G."/>
            <person name="Zhao Q."/>
            <person name="Zheng L."/>
            <person name="Zheng X.H."/>
            <person name="Zhong F.N."/>
            <person name="Zhong W."/>
            <person name="Zhou X."/>
            <person name="Zhu S.C."/>
            <person name="Zhu X."/>
            <person name="Smith H.O."/>
            <person name="Gibbs R.A."/>
            <person name="Myers E.W."/>
            <person name="Rubin G.M."/>
            <person name="Venter J.C."/>
        </authorList>
    </citation>
    <scope>NUCLEOTIDE SEQUENCE [LARGE SCALE GENOMIC DNA]</scope>
    <source>
        <strain>Berkeley</strain>
    </source>
</reference>
<reference evidence="13 15" key="3">
    <citation type="journal article" date="2002" name="Genome Biol.">
        <title>Annotation of the Drosophila melanogaster euchromatic genome: a systematic review.</title>
        <authorList>
            <person name="Misra S."/>
            <person name="Crosby M.A."/>
            <person name="Mungall C.J."/>
            <person name="Matthews B.B."/>
            <person name="Campbell K.S."/>
            <person name="Hradecky P."/>
            <person name="Huang Y."/>
            <person name="Kaminker J.S."/>
            <person name="Millburn G.H."/>
            <person name="Prochnik S.E."/>
            <person name="Smith C.D."/>
            <person name="Tupy J.L."/>
            <person name="Whitfield E.J."/>
            <person name="Bayraktaroglu L."/>
            <person name="Berman B.P."/>
            <person name="Bettencourt B.R."/>
            <person name="Celniker S.E."/>
            <person name="de Grey A.D.N.J."/>
            <person name="Drysdale R.A."/>
            <person name="Harris N.L."/>
            <person name="Richter J."/>
            <person name="Russo S."/>
            <person name="Schroeder A.J."/>
            <person name="Shu S.Q."/>
            <person name="Stapleton M."/>
            <person name="Yamada C."/>
            <person name="Ashburner M."/>
            <person name="Gelbart W.M."/>
            <person name="Rubin G.M."/>
            <person name="Lewis S.E."/>
        </authorList>
    </citation>
    <scope>GENOME REANNOTATION</scope>
    <source>
        <strain>Berkeley</strain>
    </source>
</reference>
<reference evidence="16" key="4">
    <citation type="submission" date="2009-05" db="EMBL/GenBank/DDBJ databases">
        <authorList>
            <person name="Stapleton M."/>
            <person name="Carlson J.W."/>
            <person name="Booth B."/>
            <person name="Chavez C."/>
            <person name="Frise E."/>
            <person name="George R.A."/>
            <person name="Pacleb J.M."/>
            <person name="Park S."/>
            <person name="Wan K.H."/>
            <person name="Yu C."/>
            <person name="Rubin G.M."/>
            <person name="Celniker S.E."/>
        </authorList>
    </citation>
    <scope>NUCLEOTIDE SEQUENCE [LARGE SCALE MRNA]</scope>
    <source>
        <strain evidence="16">Berkeley</strain>
        <tissue>Larva</tissue>
        <tissue>Pupae</tissue>
    </source>
</reference>
<reference evidence="13" key="5">
    <citation type="journal article" date="2001" name="Neuron">
        <title>The transmembrane protein Off-track associates with Plexins and functions downstream of Semaphorin signaling during axon guidance.</title>
        <authorList>
            <person name="Winberg M.L."/>
            <person name="Tamagnone L."/>
            <person name="Bai J."/>
            <person name="Comoglio P.M."/>
            <person name="Montell D."/>
            <person name="Goodman C.S."/>
        </authorList>
    </citation>
    <scope>FUNCTION</scope>
    <scope>INTERACTION WITH PLEXA</scope>
    <scope>DISRUPTION PHENOTYPE</scope>
</reference>
<reference evidence="13" key="6">
    <citation type="journal article" date="2004" name="Development">
        <title>The receptor tyrosine kinase Off-track is required for layer-specific neuronal connectivity in Drosophila.</title>
        <authorList>
            <person name="Cafferty P."/>
            <person name="Yu L."/>
            <person name="Rao Y."/>
        </authorList>
    </citation>
    <scope>FUNCTION</scope>
    <scope>TISSUE SPECIFICITY</scope>
    <scope>DISRUPTION PHENOTYPE</scope>
</reference>
<reference evidence="13" key="7">
    <citation type="journal article" date="2008" name="J. Proteome Res.">
        <title>Phosphoproteome analysis of Drosophila melanogaster embryos.</title>
        <authorList>
            <person name="Zhai B."/>
            <person name="Villen J."/>
            <person name="Beausoleil S.A."/>
            <person name="Mintseris J."/>
            <person name="Gygi S.P."/>
        </authorList>
    </citation>
    <scope>PHOSPHORYLATION [LARGE SCALE ANALYSIS] AT SER-678</scope>
    <scope>IDENTIFICATION BY MASS SPECTROMETRY</scope>
    <source>
        <tissue evidence="8">Embryo</tissue>
    </source>
</reference>
<reference evidence="13" key="8">
    <citation type="journal article" date="2009" name="Nat. Biotechnol.">
        <title>Mass-spectrometric identification and relative quantification of N-linked cell surface glycoproteins.</title>
        <authorList>
            <person name="Wollscheid B."/>
            <person name="Bausch-Fluck D."/>
            <person name="Henderson C."/>
            <person name="O'Brien R."/>
            <person name="Bibel M."/>
            <person name="Schiess R."/>
            <person name="Aebersold R."/>
            <person name="Watts J.D."/>
        </authorList>
    </citation>
    <scope>GLYCOSYLATION [LARGE SCALE ANALYSIS] AT ASN-524</scope>
    <scope>IDENTIFICATION BY MASS SPECTROMETRY</scope>
</reference>
<evidence type="ECO:0000255" key="1"/>
<evidence type="ECO:0000255" key="2">
    <source>
        <dbReference type="PROSITE-ProRule" id="PRU00114"/>
    </source>
</evidence>
<evidence type="ECO:0000255" key="3">
    <source>
        <dbReference type="PROSITE-ProRule" id="PRU00159"/>
    </source>
</evidence>
<evidence type="ECO:0000256" key="4">
    <source>
        <dbReference type="SAM" id="MobiDB-lite"/>
    </source>
</evidence>
<evidence type="ECO:0000269" key="5">
    <source>
    </source>
</evidence>
<evidence type="ECO:0000269" key="6">
    <source>
    </source>
</evidence>
<evidence type="ECO:0000269" key="7">
    <source>
    </source>
</evidence>
<evidence type="ECO:0000269" key="8">
    <source>
    </source>
</evidence>
<evidence type="ECO:0000269" key="9">
    <source>
    </source>
</evidence>
<evidence type="ECO:0000303" key="10">
    <source>
    </source>
</evidence>
<evidence type="ECO:0000303" key="11">
    <source>
    </source>
</evidence>
<evidence type="ECO:0000303" key="12">
    <source>
    </source>
</evidence>
<evidence type="ECO:0000305" key="13"/>
<evidence type="ECO:0000305" key="14">
    <source>
    </source>
</evidence>
<evidence type="ECO:0000312" key="15">
    <source>
        <dbReference type="EMBL" id="AAF58596.1"/>
    </source>
</evidence>
<evidence type="ECO:0000312" key="16">
    <source>
        <dbReference type="EMBL" id="AAT94478.1"/>
    </source>
</evidence>
<evidence type="ECO:0000312" key="17">
    <source>
        <dbReference type="EMBL" id="CAA45053.1"/>
    </source>
</evidence>
<evidence type="ECO:0000312" key="18">
    <source>
        <dbReference type="FlyBase" id="FBgn0004839"/>
    </source>
</evidence>
<evidence type="ECO:0007829" key="19">
    <source>
        <dbReference type="PDB" id="6S9F"/>
    </source>
</evidence>
<keyword id="KW-0002">3D-structure</keyword>
<keyword id="KW-0130">Cell adhesion</keyword>
<keyword id="KW-1003">Cell membrane</keyword>
<keyword id="KW-1015">Disulfide bond</keyword>
<keyword id="KW-0325">Glycoprotein</keyword>
<keyword id="KW-0393">Immunoglobulin domain</keyword>
<keyword id="KW-0472">Membrane</keyword>
<keyword id="KW-0524">Neurogenesis</keyword>
<keyword id="KW-0597">Phosphoprotein</keyword>
<keyword id="KW-0675">Receptor</keyword>
<keyword id="KW-1185">Reference proteome</keyword>
<keyword id="KW-0677">Repeat</keyword>
<keyword id="KW-0732">Signal</keyword>
<keyword id="KW-0812">Transmembrane</keyword>
<keyword id="KW-1133">Transmembrane helix</keyword>
<organism>
    <name type="scientific">Drosophila melanogaster</name>
    <name type="common">Fruit fly</name>
    <dbReference type="NCBI Taxonomy" id="7227"/>
    <lineage>
        <taxon>Eukaryota</taxon>
        <taxon>Metazoa</taxon>
        <taxon>Ecdysozoa</taxon>
        <taxon>Arthropoda</taxon>
        <taxon>Hexapoda</taxon>
        <taxon>Insecta</taxon>
        <taxon>Pterygota</taxon>
        <taxon>Neoptera</taxon>
        <taxon>Endopterygota</taxon>
        <taxon>Diptera</taxon>
        <taxon>Brachycera</taxon>
        <taxon>Muscomorpha</taxon>
        <taxon>Ephydroidea</taxon>
        <taxon>Drosophilidae</taxon>
        <taxon>Drosophila</taxon>
        <taxon>Sophophora</taxon>
    </lineage>
</organism>
<name>PTK7_DROME</name>
<gene>
    <name evidence="16 18" type="primary">otk</name>
    <name type="ORF">CG8967</name>
</gene>